<evidence type="ECO:0000250" key="1"/>
<evidence type="ECO:0000255" key="2"/>
<evidence type="ECO:0000305" key="3"/>
<reference key="1">
    <citation type="journal article" date="2004" name="J. Mol. Microbiol. Biotechnol.">
        <title>The complete genome sequence of Bacillus licheniformis DSM13, an organism with great industrial potential.</title>
        <authorList>
            <person name="Veith B."/>
            <person name="Herzberg C."/>
            <person name="Steckel S."/>
            <person name="Feesche J."/>
            <person name="Maurer K.H."/>
            <person name="Ehrenreich P."/>
            <person name="Baeumer S."/>
            <person name="Henne A."/>
            <person name="Liesegang H."/>
            <person name="Merkl R."/>
            <person name="Ehrenreich A."/>
            <person name="Gottschalk G."/>
        </authorList>
    </citation>
    <scope>NUCLEOTIDE SEQUENCE [LARGE SCALE GENOMIC DNA]</scope>
    <source>
        <strain>ATCC 14580 / DSM 13 / JCM 2505 / CCUG 7422 / NBRC 12200 / NCIMB 9375 / NCTC 10341 / NRRL NRS-1264 / Gibson 46</strain>
    </source>
</reference>
<reference key="2">
    <citation type="journal article" date="2004" name="Genome Biol.">
        <title>Complete genome sequence of the industrial bacterium Bacillus licheniformis and comparisons with closely related Bacillus species.</title>
        <authorList>
            <person name="Rey M.W."/>
            <person name="Ramaiya P."/>
            <person name="Nelson B.A."/>
            <person name="Brody-Karpin S.D."/>
            <person name="Zaretsky E.J."/>
            <person name="Tang M."/>
            <person name="Lopez de Leon A."/>
            <person name="Xiang H."/>
            <person name="Gusti V."/>
            <person name="Clausen I.G."/>
            <person name="Olsen P.B."/>
            <person name="Rasmussen M.D."/>
            <person name="Andersen J.T."/>
            <person name="Joergensen P.L."/>
            <person name="Larsen T.S."/>
            <person name="Sorokin A."/>
            <person name="Bolotin A."/>
            <person name="Lapidus A."/>
            <person name="Galleron N."/>
            <person name="Ehrlich S.D."/>
            <person name="Berka R.M."/>
        </authorList>
    </citation>
    <scope>NUCLEOTIDE SEQUENCE [LARGE SCALE GENOMIC DNA]</scope>
    <source>
        <strain>ATCC 14580 / DSM 13 / JCM 2505 / CCUG 7422 / NBRC 12200 / NCIMB 9375 / NCTC 10341 / NRRL NRS-1264 / Gibson 46</strain>
    </source>
</reference>
<name>FLIT_BACLD</name>
<keyword id="KW-1005">Bacterial flagellum biogenesis</keyword>
<keyword id="KW-0143">Chaperone</keyword>
<keyword id="KW-0175">Coiled coil</keyword>
<keyword id="KW-0963">Cytoplasm</keyword>
<keyword id="KW-1185">Reference proteome</keyword>
<protein>
    <recommendedName>
        <fullName>Flagellar protein FliT</fullName>
    </recommendedName>
</protein>
<sequence>MEKIELLYSETKHMLAQIKGAPESDELVQAIEDFLKKRDGLIREIKPPLSETEKRQLQQVTDMEPLIMAELKRLQQAVKQELLQAKQKRAMHHSYINPYANMTIDGTYYDKRK</sequence>
<dbReference type="EMBL" id="CP000002">
    <property type="protein sequence ID" value="AAU25220.1"/>
    <property type="molecule type" value="Genomic_DNA"/>
</dbReference>
<dbReference type="EMBL" id="AE017333">
    <property type="protein sequence ID" value="AAU42592.1"/>
    <property type="molecule type" value="Genomic_DNA"/>
</dbReference>
<dbReference type="RefSeq" id="WP_003185686.1">
    <property type="nucleotide sequence ID" value="NC_006322.1"/>
</dbReference>
<dbReference type="SMR" id="Q65EC2"/>
<dbReference type="STRING" id="279010.BL03378"/>
<dbReference type="GeneID" id="92859649"/>
<dbReference type="KEGG" id="bld:BLi03776"/>
<dbReference type="KEGG" id="bli:BL03378"/>
<dbReference type="HOGENOM" id="CLU_165941_1_0_9"/>
<dbReference type="Proteomes" id="UP000000606">
    <property type="component" value="Chromosome"/>
</dbReference>
<dbReference type="GO" id="GO:0005829">
    <property type="term" value="C:cytosol"/>
    <property type="evidence" value="ECO:0007669"/>
    <property type="project" value="UniProtKB-SubCell"/>
</dbReference>
<dbReference type="GO" id="GO:0044781">
    <property type="term" value="P:bacterial-type flagellum organization"/>
    <property type="evidence" value="ECO:0007669"/>
    <property type="project" value="UniProtKB-KW"/>
</dbReference>
<accession>Q65EC2</accession>
<accession>Q62PU1</accession>
<comment type="function">
    <text evidence="1">May act as an export chaperone for the filament capping protein FliD.</text>
</comment>
<comment type="subunit">
    <text evidence="1">Homodimer.</text>
</comment>
<comment type="subcellular location">
    <subcellularLocation>
        <location evidence="1">Cytoplasm</location>
        <location evidence="1">Cytosol</location>
    </subcellularLocation>
</comment>
<comment type="similarity">
    <text evidence="3">Belongs to the bacillales FliT family.</text>
</comment>
<gene>
    <name type="primary">fliT</name>
    <name type="ordered locus">BLi03776</name>
    <name type="ordered locus">BL03378</name>
</gene>
<proteinExistence type="inferred from homology"/>
<feature type="chain" id="PRO_0000353907" description="Flagellar protein FliT">
    <location>
        <begin position="1"/>
        <end position="113"/>
    </location>
</feature>
<feature type="coiled-coil region" evidence="2">
    <location>
        <begin position="25"/>
        <end position="91"/>
    </location>
</feature>
<organism>
    <name type="scientific">Bacillus licheniformis (strain ATCC 14580 / DSM 13 / JCM 2505 / CCUG 7422 / NBRC 12200 / NCIMB 9375 / NCTC 10341 / NRRL NRS-1264 / Gibson 46)</name>
    <dbReference type="NCBI Taxonomy" id="279010"/>
    <lineage>
        <taxon>Bacteria</taxon>
        <taxon>Bacillati</taxon>
        <taxon>Bacillota</taxon>
        <taxon>Bacilli</taxon>
        <taxon>Bacillales</taxon>
        <taxon>Bacillaceae</taxon>
        <taxon>Bacillus</taxon>
    </lineage>
</organism>